<sequence>MSDLNKLGLAEARDLLRKGDTTSVELTEACLKAIDGADALNAFVHKTPDVALDRAKAADARIAEGDAPAMCGLPIGMKDLFCTKGVDSQAASNILKGFKPEYESTVSQKLQDAGAVMLGKLNMDEFAMGSSNETSAYGNAISPWRREGDETPLTPGGSSGGSAAAVAADLCLAATGTDTGGSIRQPAAFTGTVGIKPTYGRCSRWGIVAFASSLDQAGPMTKNVRDAAIMLEAMCGHDAKDSTSVDLAVPNFEAMLTGDIKGKKIGIPREYRMDGMPAEIAKLWDEGAAMLKAAGAEIVDISLPHTKYALPAYYVIAPAEASSNLARYDGVRYGHRATLAQGDGITEMYEKTRAEGFGHEVQRRVMVGTYVLSAGFYDAYYNRARKVRTLIKKDFEDVFAAGVDAILTPATPSAAFGLGEMNDEDPVKMYLNDVFTVTVNLAGLPGISVPTGVDTQGLPLGLQLIGRPWDEGDLLNTAYALEQAAGFVAKPAQWW</sequence>
<comment type="function">
    <text evidence="1">Allows the formation of correctly charged Gln-tRNA(Gln) through the transamidation of misacylated Glu-tRNA(Gln) in organisms which lack glutaminyl-tRNA synthetase. The reaction takes place in the presence of glutamine and ATP through an activated gamma-phospho-Glu-tRNA(Gln).</text>
</comment>
<comment type="catalytic activity">
    <reaction evidence="1">
        <text>L-glutamyl-tRNA(Gln) + L-glutamine + ATP + H2O = L-glutaminyl-tRNA(Gln) + L-glutamate + ADP + phosphate + H(+)</text>
        <dbReference type="Rhea" id="RHEA:17521"/>
        <dbReference type="Rhea" id="RHEA-COMP:9681"/>
        <dbReference type="Rhea" id="RHEA-COMP:9684"/>
        <dbReference type="ChEBI" id="CHEBI:15377"/>
        <dbReference type="ChEBI" id="CHEBI:15378"/>
        <dbReference type="ChEBI" id="CHEBI:29985"/>
        <dbReference type="ChEBI" id="CHEBI:30616"/>
        <dbReference type="ChEBI" id="CHEBI:43474"/>
        <dbReference type="ChEBI" id="CHEBI:58359"/>
        <dbReference type="ChEBI" id="CHEBI:78520"/>
        <dbReference type="ChEBI" id="CHEBI:78521"/>
        <dbReference type="ChEBI" id="CHEBI:456216"/>
        <dbReference type="EC" id="6.3.5.7"/>
    </reaction>
</comment>
<comment type="subunit">
    <text evidence="1">Heterotrimer of A, B and C subunits.</text>
</comment>
<comment type="similarity">
    <text evidence="1">Belongs to the amidase family. GatA subfamily.</text>
</comment>
<organism>
    <name type="scientific">Ruegeria sp. (strain TM1040)</name>
    <name type="common">Silicibacter sp.</name>
    <dbReference type="NCBI Taxonomy" id="292414"/>
    <lineage>
        <taxon>Bacteria</taxon>
        <taxon>Pseudomonadati</taxon>
        <taxon>Pseudomonadota</taxon>
        <taxon>Alphaproteobacteria</taxon>
        <taxon>Rhodobacterales</taxon>
        <taxon>Roseobacteraceae</taxon>
        <taxon>Ruegeria</taxon>
    </lineage>
</organism>
<gene>
    <name evidence="1" type="primary">gatA</name>
    <name type="ordered locus">TM1040_1918</name>
</gene>
<keyword id="KW-0067">ATP-binding</keyword>
<keyword id="KW-0436">Ligase</keyword>
<keyword id="KW-0547">Nucleotide-binding</keyword>
<keyword id="KW-0648">Protein biosynthesis</keyword>
<keyword id="KW-1185">Reference proteome</keyword>
<name>GATA_RUEST</name>
<protein>
    <recommendedName>
        <fullName evidence="1">Glutamyl-tRNA(Gln) amidotransferase subunit A</fullName>
        <shortName evidence="1">Glu-ADT subunit A</shortName>
        <ecNumber evidence="1">6.3.5.7</ecNumber>
    </recommendedName>
</protein>
<feature type="chain" id="PRO_1000015904" description="Glutamyl-tRNA(Gln) amidotransferase subunit A">
    <location>
        <begin position="1"/>
        <end position="495"/>
    </location>
</feature>
<feature type="active site" description="Charge relay system" evidence="1">
    <location>
        <position position="78"/>
    </location>
</feature>
<feature type="active site" description="Charge relay system" evidence="1">
    <location>
        <position position="158"/>
    </location>
</feature>
<feature type="active site" description="Acyl-ester intermediate" evidence="1">
    <location>
        <position position="182"/>
    </location>
</feature>
<accession>Q1GFB5</accession>
<dbReference type="EC" id="6.3.5.7" evidence="1"/>
<dbReference type="EMBL" id="CP000377">
    <property type="protein sequence ID" value="ABF64651.1"/>
    <property type="molecule type" value="Genomic_DNA"/>
</dbReference>
<dbReference type="RefSeq" id="WP_011539245.1">
    <property type="nucleotide sequence ID" value="NC_008044.1"/>
</dbReference>
<dbReference type="SMR" id="Q1GFB5"/>
<dbReference type="STRING" id="292414.TM1040_1918"/>
<dbReference type="KEGG" id="sit:TM1040_1918"/>
<dbReference type="eggNOG" id="COG0154">
    <property type="taxonomic scope" value="Bacteria"/>
</dbReference>
<dbReference type="HOGENOM" id="CLU_009600_0_3_5"/>
<dbReference type="OrthoDB" id="9811471at2"/>
<dbReference type="Proteomes" id="UP000000636">
    <property type="component" value="Chromosome"/>
</dbReference>
<dbReference type="GO" id="GO:0030956">
    <property type="term" value="C:glutamyl-tRNA(Gln) amidotransferase complex"/>
    <property type="evidence" value="ECO:0007669"/>
    <property type="project" value="InterPro"/>
</dbReference>
<dbReference type="GO" id="GO:0005524">
    <property type="term" value="F:ATP binding"/>
    <property type="evidence" value="ECO:0007669"/>
    <property type="project" value="UniProtKB-KW"/>
</dbReference>
<dbReference type="GO" id="GO:0050567">
    <property type="term" value="F:glutaminyl-tRNA synthase (glutamine-hydrolyzing) activity"/>
    <property type="evidence" value="ECO:0007669"/>
    <property type="project" value="UniProtKB-UniRule"/>
</dbReference>
<dbReference type="GO" id="GO:0006412">
    <property type="term" value="P:translation"/>
    <property type="evidence" value="ECO:0007669"/>
    <property type="project" value="UniProtKB-UniRule"/>
</dbReference>
<dbReference type="Gene3D" id="3.90.1300.10">
    <property type="entry name" value="Amidase signature (AS) domain"/>
    <property type="match status" value="1"/>
</dbReference>
<dbReference type="HAMAP" id="MF_00120">
    <property type="entry name" value="GatA"/>
    <property type="match status" value="1"/>
</dbReference>
<dbReference type="InterPro" id="IPR000120">
    <property type="entry name" value="Amidase"/>
</dbReference>
<dbReference type="InterPro" id="IPR020556">
    <property type="entry name" value="Amidase_CS"/>
</dbReference>
<dbReference type="InterPro" id="IPR023631">
    <property type="entry name" value="Amidase_dom"/>
</dbReference>
<dbReference type="InterPro" id="IPR036928">
    <property type="entry name" value="AS_sf"/>
</dbReference>
<dbReference type="InterPro" id="IPR004412">
    <property type="entry name" value="GatA"/>
</dbReference>
<dbReference type="NCBIfam" id="TIGR00132">
    <property type="entry name" value="gatA"/>
    <property type="match status" value="1"/>
</dbReference>
<dbReference type="PANTHER" id="PTHR11895:SF151">
    <property type="entry name" value="GLUTAMYL-TRNA(GLN) AMIDOTRANSFERASE SUBUNIT A"/>
    <property type="match status" value="1"/>
</dbReference>
<dbReference type="PANTHER" id="PTHR11895">
    <property type="entry name" value="TRANSAMIDASE"/>
    <property type="match status" value="1"/>
</dbReference>
<dbReference type="Pfam" id="PF01425">
    <property type="entry name" value="Amidase"/>
    <property type="match status" value="1"/>
</dbReference>
<dbReference type="SUPFAM" id="SSF75304">
    <property type="entry name" value="Amidase signature (AS) enzymes"/>
    <property type="match status" value="1"/>
</dbReference>
<dbReference type="PROSITE" id="PS00571">
    <property type="entry name" value="AMIDASES"/>
    <property type="match status" value="1"/>
</dbReference>
<evidence type="ECO:0000255" key="1">
    <source>
        <dbReference type="HAMAP-Rule" id="MF_00120"/>
    </source>
</evidence>
<proteinExistence type="inferred from homology"/>
<reference key="1">
    <citation type="submission" date="2006-05" db="EMBL/GenBank/DDBJ databases">
        <title>Complete sequence of chromosome of Silicibacter sp. TM1040.</title>
        <authorList>
            <consortium name="US DOE Joint Genome Institute"/>
            <person name="Copeland A."/>
            <person name="Lucas S."/>
            <person name="Lapidus A."/>
            <person name="Barry K."/>
            <person name="Detter J.C."/>
            <person name="Glavina del Rio T."/>
            <person name="Hammon N."/>
            <person name="Israni S."/>
            <person name="Dalin E."/>
            <person name="Tice H."/>
            <person name="Pitluck S."/>
            <person name="Brettin T."/>
            <person name="Bruce D."/>
            <person name="Han C."/>
            <person name="Tapia R."/>
            <person name="Goodwin L."/>
            <person name="Thompson L.S."/>
            <person name="Gilna P."/>
            <person name="Schmutz J."/>
            <person name="Larimer F."/>
            <person name="Land M."/>
            <person name="Hauser L."/>
            <person name="Kyrpides N."/>
            <person name="Kim E."/>
            <person name="Belas R."/>
            <person name="Moran M.A."/>
            <person name="Buchan A."/>
            <person name="Gonzalez J.M."/>
            <person name="Schell M.A."/>
            <person name="Sun F."/>
            <person name="Richardson P."/>
        </authorList>
    </citation>
    <scope>NUCLEOTIDE SEQUENCE [LARGE SCALE GENOMIC DNA]</scope>
    <source>
        <strain>TM1040</strain>
    </source>
</reference>